<organismHost>
    <name type="scientific">Homo sapiens</name>
    <name type="common">Human</name>
    <dbReference type="NCBI Taxonomy" id="9606"/>
</organismHost>
<feature type="chain" id="PRO_0000085368" description="Protein Tat">
    <location>
        <begin position="1"/>
        <end position="133"/>
    </location>
</feature>
<feature type="region of interest" description="Disordered" evidence="3">
    <location>
        <begin position="1"/>
        <end position="34"/>
    </location>
</feature>
<feature type="region of interest" description="Cysteine-rich" evidence="1">
    <location>
        <begin position="53"/>
        <end position="69"/>
    </location>
</feature>
<feature type="region of interest" description="Core" evidence="1">
    <location>
        <begin position="70"/>
        <end position="80"/>
    </location>
</feature>
<feature type="region of interest" description="Disordered" evidence="3">
    <location>
        <begin position="83"/>
        <end position="133"/>
    </location>
</feature>
<feature type="short sequence motif" description="Nuclear localization signal, and RNA-binding (TAR)" evidence="1">
    <location>
        <begin position="81"/>
        <end position="93"/>
    </location>
</feature>
<feature type="compositionally biased region" description="Basic and acidic residues" evidence="3">
    <location>
        <begin position="1"/>
        <end position="12"/>
    </location>
</feature>
<feature type="compositionally biased region" description="Polar residues" evidence="3">
    <location>
        <begin position="14"/>
        <end position="34"/>
    </location>
</feature>
<feature type="compositionally biased region" description="Basic residues" evidence="3">
    <location>
        <begin position="83"/>
        <end position="94"/>
    </location>
</feature>
<feature type="compositionally biased region" description="Low complexity" evidence="3">
    <location>
        <begin position="95"/>
        <end position="105"/>
    </location>
</feature>
<feature type="modified residue" description="Phosphothreonine; by host CDK9" evidence="1">
    <location>
        <position position="88"/>
    </location>
</feature>
<feature type="modified residue" description="Phosphoserine; by host CDK9" evidence="1">
    <location>
        <position position="97"/>
    </location>
</feature>
<feature type="splice variant" id="VSP_022438" description="In isoform Short." evidence="4">
    <location>
        <begin position="103"/>
        <end position="133"/>
    </location>
</feature>
<keyword id="KW-0010">Activator</keyword>
<keyword id="KW-0014">AIDS</keyword>
<keyword id="KW-0025">Alternative splicing</keyword>
<keyword id="KW-1048">Host nucleus</keyword>
<keyword id="KW-0945">Host-virus interaction</keyword>
<keyword id="KW-0597">Phosphoprotein</keyword>
<keyword id="KW-0694">RNA-binding</keyword>
<keyword id="KW-0804">Transcription</keyword>
<keyword id="KW-0805">Transcription regulation</keyword>
<gene>
    <name type="primary">tat</name>
</gene>
<comment type="function">
    <text evidence="2">Transcriptional activator that increases RNA Pol II processivity, thereby increasing the level of full-length viral transcripts. Recognizes a hairpin structure at the 5'-LTR of the nascent viral mRNAs referred to as the transactivation responsive RNA element (TAR) and recruits the cyclin T1-CDK9 complex (P-TEFb complex) that will in turn hyperphosphorylate the RNA polymerase II to allow efficient elongation. The CDK9 component of P-TEFb and other Tat-activated kinases hyperphosphorylate the C-terminus of RNA Pol II that becomes stabilized and much more processive.</text>
</comment>
<comment type="function">
    <text evidence="1">Extracellular circulating Tat can be endocytosed by surrounding uninfected cells via the binding to several surface receptors. Endosomal low pH allows Tat to cross the endosome membrane to enter the cytosol and eventually further translocate into the nucleus, thereby inducing severe cell dysfunctions ranging from cell activation to cell death. Through (By similarity).</text>
</comment>
<comment type="subunit">
    <text evidence="1">Interacts with host CCNT1. Associates with the P-TEFb complex composed at least of Tat, P-TEFb (CDK9 and CCNT1), TAR RNA, RNA Pol II. Interacts with CCNT2; the resulting complex is unable to bind to TAR RNA (By similarity).</text>
</comment>
<comment type="subcellular location">
    <subcellularLocation>
        <location evidence="1">Host nucleus</location>
        <location evidence="1">Host nucleolus</location>
    </subcellularLocation>
</comment>
<comment type="alternative products">
    <event type="alternative splicing"/>
    <isoform>
        <id>P24109-1</id>
        <name>Long</name>
        <sequence type="displayed"/>
    </isoform>
    <isoform>
        <id>P24109-2</id>
        <name>Short</name>
        <sequence type="described" ref="VSP_022438"/>
    </isoform>
</comment>
<comment type="domain">
    <text evidence="1">The Arg-rich RNA-binding region binds the TAR RNA. This region also mediates the nuclear localization (By similarity).</text>
</comment>
<comment type="PTM">
    <text evidence="1">The phosphorylation by CDK9 does not seem to be important for transactivation function.</text>
</comment>
<comment type="miscellaneous">
    <molecule>Isoform Short</molecule>
    <text evidence="4">Expressed in the late stage of the infection cycle, when unspliced viral RNAs are exported to the cytoplasm by the viral Rev protein.</text>
</comment>
<comment type="similarity">
    <text evidence="4">Belongs to the lentiviruses Tat family.</text>
</comment>
<name>TAT_HV2CA</name>
<accession>P24109</accession>
<dbReference type="EMBL" id="D00835">
    <property type="protein sequence ID" value="BAA00714.1"/>
    <property type="molecule type" value="Genomic_DNA"/>
</dbReference>
<dbReference type="PIR" id="I38475">
    <property type="entry name" value="TNLJCA"/>
</dbReference>
<dbReference type="Proteomes" id="UP000007421">
    <property type="component" value="Segment"/>
</dbReference>
<dbReference type="GO" id="GO:0044196">
    <property type="term" value="C:host cell nucleolus"/>
    <property type="evidence" value="ECO:0007669"/>
    <property type="project" value="UniProtKB-SubCell"/>
</dbReference>
<dbReference type="GO" id="GO:0003723">
    <property type="term" value="F:RNA binding"/>
    <property type="evidence" value="ECO:0007669"/>
    <property type="project" value="UniProtKB-KW"/>
</dbReference>
<dbReference type="GO" id="GO:0001070">
    <property type="term" value="F:RNA-binding transcription regulator activity"/>
    <property type="evidence" value="ECO:0007669"/>
    <property type="project" value="InterPro"/>
</dbReference>
<dbReference type="GO" id="GO:0050434">
    <property type="term" value="P:positive regulation of viral transcription"/>
    <property type="evidence" value="ECO:0007669"/>
    <property type="project" value="InterPro"/>
</dbReference>
<dbReference type="Gene3D" id="4.10.20.10">
    <property type="entry name" value="Tat domain"/>
    <property type="match status" value="1"/>
</dbReference>
<dbReference type="InterPro" id="IPR001831">
    <property type="entry name" value="IV_Tat"/>
</dbReference>
<dbReference type="InterPro" id="IPR036963">
    <property type="entry name" value="Tat_dom_sf"/>
</dbReference>
<dbReference type="Pfam" id="PF00539">
    <property type="entry name" value="Tat"/>
    <property type="match status" value="1"/>
</dbReference>
<dbReference type="PRINTS" id="PR00055">
    <property type="entry name" value="HIVTATDOMAIN"/>
</dbReference>
<organism>
    <name type="scientific">Human immunodeficiency virus type 2 subtype A (isolate CAM2)</name>
    <name type="common">HIV-2</name>
    <dbReference type="NCBI Taxonomy" id="11715"/>
    <lineage>
        <taxon>Viruses</taxon>
        <taxon>Riboviria</taxon>
        <taxon>Pararnavirae</taxon>
        <taxon>Artverviricota</taxon>
        <taxon>Revtraviricetes</taxon>
        <taxon>Ortervirales</taxon>
        <taxon>Retroviridae</taxon>
        <taxon>Orthoretrovirinae</taxon>
        <taxon>Lentivirus</taxon>
        <taxon>Human immunodeficiency virus 2</taxon>
    </lineage>
</organism>
<proteinExistence type="inferred from homology"/>
<sequence length="133" mass="14850">MLDMETPLKEPESSLGSCNEPSSRTSGQDATTQELAKLGEEILSQLYQPLEECDNSCYCKRCCYHCQLCFLKKGLGICYDRKGRRRRTPKKAKAHSSSASDKSISTRTRNSQPAKKQKKTLEATVETDPGLGR</sequence>
<protein>
    <recommendedName>
        <fullName>Protein Tat</fullName>
    </recommendedName>
    <alternativeName>
        <fullName>Transactivating regulatory protein</fullName>
    </alternativeName>
</protein>
<evidence type="ECO:0000250" key="1"/>
<evidence type="ECO:0000250" key="2">
    <source>
        <dbReference type="UniProtKB" id="P04608"/>
    </source>
</evidence>
<evidence type="ECO:0000256" key="3">
    <source>
        <dbReference type="SAM" id="MobiDB-lite"/>
    </source>
</evidence>
<evidence type="ECO:0000305" key="4"/>
<reference key="1">
    <citation type="journal article" date="1991" name="J. Gen. Virol.">
        <title>Nucleotide sequence of a Guinea-Bissau-derived human immunodeficiency virus type 2 proviral clone (HIV-2CAM2).</title>
        <authorList>
            <person name="Tristem M."/>
            <person name="Hill F."/>
            <person name="Karpas A."/>
        </authorList>
    </citation>
    <scope>NUCLEOTIDE SEQUENCE [GENOMIC DNA]</scope>
</reference>
<reference key="2">
    <citation type="journal article" date="2005" name="Microbes Infect.">
        <title>Decoding Tat: the biology of HIV Tat posttranslational modifications.</title>
        <authorList>
            <person name="Hetzer C."/>
            <person name="Dormeyer W."/>
            <person name="Schnolzer M."/>
            <person name="Ott M."/>
        </authorList>
    </citation>
    <scope>REVIEW</scope>
    <scope>ALTERNATIVE SPLICING</scope>
</reference>